<evidence type="ECO:0000269" key="1">
    <source>
    </source>
</evidence>
<evidence type="ECO:0000269" key="2">
    <source>
    </source>
</evidence>
<evidence type="ECO:0000269" key="3">
    <source>
    </source>
</evidence>
<evidence type="ECO:0000269" key="4">
    <source>
    </source>
</evidence>
<evidence type="ECO:0000269" key="5">
    <source>
    </source>
</evidence>
<evidence type="ECO:0000269" key="6">
    <source>
    </source>
</evidence>
<evidence type="ECO:0000269" key="7">
    <source>
    </source>
</evidence>
<evidence type="ECO:0000269" key="8">
    <source>
    </source>
</evidence>
<evidence type="ECO:0000305" key="9"/>
<evidence type="ECO:0007744" key="10">
    <source>
        <dbReference type="PDB" id="4MQW"/>
    </source>
</evidence>
<evidence type="ECO:0007829" key="11">
    <source>
        <dbReference type="PDB" id="7T9I"/>
    </source>
</evidence>
<evidence type="ECO:0007829" key="12">
    <source>
        <dbReference type="PDB" id="7UTZ"/>
    </source>
</evidence>
<reference key="1">
    <citation type="journal article" date="1979" name="Nature">
        <title>Isolation, cloning and sequence analysis of the cDNA for the alpha-subunit of human chorionic gonadotropin.</title>
        <authorList>
            <person name="Fiddes J.C."/>
            <person name="Goodman H.M."/>
        </authorList>
    </citation>
    <scope>NUCLEOTIDE SEQUENCE [GENOMIC DNA]</scope>
</reference>
<reference key="2">
    <citation type="journal article" date="1994" name="Nippon Rinsho">
        <title>Structure and regulation of human thyroid-stimulating hormone (TSH) gene.</title>
        <authorList>
            <person name="Miyoshi I."/>
            <person name="Kasai N."/>
            <person name="Hayashizaki Y."/>
        </authorList>
    </citation>
    <scope>NUCLEOTIDE SEQUENCE [GENOMIC DNA]</scope>
</reference>
<reference key="3">
    <citation type="journal article" date="2004" name="Genome Res.">
        <title>The status, quality, and expansion of the NIH full-length cDNA project: the Mammalian Gene Collection (MGC).</title>
        <authorList>
            <consortium name="The MGC Project Team"/>
        </authorList>
    </citation>
    <scope>NUCLEOTIDE SEQUENCE [LARGE SCALE MRNA]</scope>
    <source>
        <tissue>Placenta</tissue>
    </source>
</reference>
<reference key="4">
    <citation type="journal article" date="1981" name="J. Mol. Appl. Genet.">
        <title>The gene encoding the common alpha subunit of the four human glycoprotein hormones.</title>
        <authorList>
            <person name="Fiddes J.C."/>
            <person name="Goodman H.M."/>
        </authorList>
    </citation>
    <scope>NUCLEOTIDE SEQUENCE [GENOMIC DNA] OF 1-98</scope>
</reference>
<reference key="5">
    <citation type="journal article" date="1981" name="J. Biol. Chem.">
        <title>The amino acid sequences of the prepeptides contained in the alpha and beta subunits of human choriogonadotropin.</title>
        <authorList>
            <person name="Birken S."/>
            <person name="Fetherston J."/>
            <person name="Canfield R.E."/>
            <person name="Boime I."/>
        </authorList>
    </citation>
    <scope>PROTEIN SEQUENCE OF 1-24 (PRECURSOR PROTEIN)</scope>
</reference>
<reference key="6">
    <citation type="journal article" date="1977" name="Can. J. Biochem.">
        <title>Human pituitary thyrotropin. The primary structure of the alpha and beta subunits.</title>
        <authorList>
            <person name="Sairam M.R."/>
            <person name="Li C.H."/>
        </authorList>
    </citation>
    <scope>PROTEIN SEQUENCE OF 28-116</scope>
</reference>
<reference key="7">
    <citation type="journal article" date="1972" name="Biochem. Biophys. Res. Commun.">
        <title>Human pituitary interstitial cell stimulating hormone: primary structure of the alpha-subunit.</title>
        <authorList>
            <person name="Sairam M.R."/>
            <person name="Papkoff H."/>
            <person name="Li C.H."/>
        </authorList>
    </citation>
    <scope>PROTEIN SEQUENCE OF 28-116</scope>
</reference>
<reference key="8">
    <citation type="journal article" date="1978" name="Fed. Proc.">
        <title>Structure of human luteninizing hormone.</title>
        <authorList>
            <person name="Keutmann H.T."/>
            <person name="Williams R.M."/>
            <person name="Bishop W.H."/>
            <person name="Ryan R.J."/>
        </authorList>
    </citation>
    <scope>PROTEIN SEQUENCE</scope>
    <scope>SEQUENCE REVISION</scope>
</reference>
<reference key="9">
    <citation type="journal article" date="1975" name="J. Biol. Chem.">
        <title>Primary amino acid sequence of follicle-stimulating hormone from human pituitary glands. I. alpha subunit.</title>
        <authorList>
            <person name="Rathnam P."/>
            <person name="Saxena B.B."/>
        </authorList>
    </citation>
    <scope>PROTEIN SEQUENCE OF 25-116</scope>
    <source>
        <tissue>Pituitary</tissue>
    </source>
</reference>
<reference key="10">
    <citation type="journal article" date="1974" name="J. Clin. Endocrinol. Metab.">
        <title>Human follicle stimulating hormone (hFSH): first proposal for the amino acid sequence of the alpha-subunit (hFSHa) and first demonstration of its identity with the alpha-subunit of human luteinizing hormone (hLHa).</title>
        <authorList>
            <person name="Shome B."/>
            <person name="Parlow A.F."/>
        </authorList>
    </citation>
    <scope>PROTEIN SEQUENCE OF 28-116</scope>
</reference>
<reference key="11">
    <citation type="journal article" date="1975" name="J. Biol. Chem.">
        <title>The amino acid sequence of human chorionic gonadotropin. The alpha subunit and beta subunit.</title>
        <authorList>
            <person name="Morgan F.J."/>
            <person name="Birken S."/>
            <person name="Canfield R.E."/>
        </authorList>
    </citation>
    <scope>PROTEIN SEQUENCE OF 25-116</scope>
</reference>
<reference key="12">
    <citation type="journal article" date="1973" name="J. Biol. Chem.">
        <title>Human chorionic gonadotropin. Linear amino acid sequence of the alpha subunit.</title>
        <authorList>
            <person name="Bellisario R."/>
            <person name="Carlsen R.B."/>
            <person name="Bahl O.P."/>
        </authorList>
    </citation>
    <scope>PROTEIN SEQUENCE OF 25-116</scope>
</reference>
<reference key="13">
    <citation type="journal article" date="1980" name="Biochim. Biophys. Acta">
        <title>Studies on the disulfide bonds in human pituitary follicle-stimulating hormone.</title>
        <authorList>
            <person name="Fujiki Y."/>
            <person name="Rathnam P."/>
            <person name="Saxena B.B."/>
        </authorList>
    </citation>
    <scope>PRELIMINARY ASSIGNMENT OF DISULFIDE BONDS</scope>
</reference>
<reference key="14">
    <citation type="journal article" date="1980" name="J. Biol. Chem.">
        <title>Assignment of disulfide bonds in the alpha subunit of human chorionic gonadotropin.</title>
        <authorList>
            <person name="Mise T."/>
            <person name="Bahl O.P."/>
        </authorList>
    </citation>
    <scope>PRELIMINARY ASSIGNMENT OF DISULFIDE BONDS</scope>
</reference>
<reference key="15">
    <citation type="journal article" date="1991" name="Eur. J. Biochem.">
        <title>NMR investigations of the N-linked oligosaccharides at individual glycosylation sites of human lutropin.</title>
        <authorList>
            <person name="Weisshaar G."/>
            <person name="Hiyama J."/>
            <person name="Renwick A.G.C."/>
            <person name="Nimtz M."/>
        </authorList>
    </citation>
    <scope>STRUCTURE OF CARBOHYDRATES</scope>
</reference>
<reference key="16">
    <citation type="journal article" date="1989" name="J. Biol. Chem.">
        <title>Expression of biologically active human follitropin in Chinese hamster ovary cells.</title>
        <authorList>
            <person name="Keene J.L."/>
            <person name="Matzuk M.M."/>
            <person name="Otani T."/>
            <person name="Fauser B.C.J.M."/>
            <person name="Galway A.B."/>
            <person name="Hsueh A.J.W."/>
            <person name="Boime I."/>
        </authorList>
    </citation>
    <scope>FUNCTION</scope>
    <scope>SUBUNIT</scope>
    <scope>SUBCELLULAR LOCATION</scope>
</reference>
<reference key="17">
    <citation type="journal article" date="1994" name="Nature">
        <title>Crystal structure of human chorionic gonadotropin.</title>
        <authorList>
            <person name="Lapthorn A.J."/>
            <person name="Harris D.C."/>
            <person name="Littlejohn A."/>
            <person name="Lustbader J.W."/>
            <person name="Canfield R.E."/>
            <person name="Machin K.J."/>
            <person name="Morgan F.J."/>
            <person name="Isaacs N.W."/>
        </authorList>
    </citation>
    <scope>X-RAY CRYSTALLOGRAPHY (3.0 ANGSTROMS)</scope>
</reference>
<reference key="18">
    <citation type="journal article" date="1996" name="Eur. J. Biochem.">
        <title>NMR studies of the free alpha subunit of human chorionic gonadotropin. Structural influences of N-glycosylation and the beta subunit on the conformation of the alpha subunit.</title>
        <authorList>
            <person name="de Beer T."/>
            <person name="van Zuylen C.W.E.M."/>
            <person name="Leeflang B.R."/>
            <person name="Haard K."/>
            <person name="Boelens R."/>
            <person name="Kaptein R."/>
            <person name="Kamerling J.P."/>
            <person name="Vliegenthart J.F.G."/>
        </authorList>
    </citation>
    <scope>STRUCTURE BY NMR</scope>
</reference>
<reference key="19">
    <citation type="journal article" date="2005" name="Nature">
        <title>Structure of human follicle-stimulating hormone in complex with its receptor.</title>
        <authorList>
            <person name="Fan Q.R."/>
            <person name="Hendrickson W.A."/>
        </authorList>
    </citation>
    <scope>X-RAY CRYSTALLOGRAPHY (2.92 ANGSTROMS) OF 25-116 IN COMPLEX WITH FSHB AND FSHR</scope>
    <scope>DISULFIDE BONDS</scope>
    <scope>GLYCOSYLATION AT ASN-76 AND ASN-102</scope>
</reference>
<reference evidence="10" key="20">
    <citation type="journal article" date="2014" name="J. Biol. Chem.">
        <title>Evidence for follicle-stimulating hormone receptor as a functional trimer.</title>
        <authorList>
            <person name="Jiang X."/>
            <person name="Fischer D."/>
            <person name="Chen X."/>
            <person name="McKenna S.D."/>
            <person name="Liu H."/>
            <person name="Sriraman V."/>
            <person name="Yu H.N."/>
            <person name="Goutopoulos A."/>
            <person name="Arkinstall S."/>
            <person name="He X."/>
        </authorList>
    </citation>
    <scope>X-RAY CRYSTALLOGRAPHY (2.90 ANGSTROMS) OF 25-116 IN COMPLEX WITH FSHB AND FSHR</scope>
    <scope>FUNCTION</scope>
    <scope>SUBCELLULAR LOCATION</scope>
    <scope>DISULFIDE BONDS</scope>
    <scope>GLYCOSYLATION AT ASN-76 AND ASN-102</scope>
    <scope>MUTAGENESIS OF ASN-76</scope>
</reference>
<sequence>MDYYRKYAAIFLVTLSVFLHVLHSAPDVQDCPECTLQENPFFSQPGAPILQCMGCCFSRAYPTPLRSKKTMLVQKNVTSESTCCVAKSYNRVTVMGGFKVENHTACHCSTCYYHKS</sequence>
<organism>
    <name type="scientific">Homo sapiens</name>
    <name type="common">Human</name>
    <dbReference type="NCBI Taxonomy" id="9606"/>
    <lineage>
        <taxon>Eukaryota</taxon>
        <taxon>Metazoa</taxon>
        <taxon>Chordata</taxon>
        <taxon>Craniata</taxon>
        <taxon>Vertebrata</taxon>
        <taxon>Euteleostomi</taxon>
        <taxon>Mammalia</taxon>
        <taxon>Eutheria</taxon>
        <taxon>Euarchontoglires</taxon>
        <taxon>Primates</taxon>
        <taxon>Haplorrhini</taxon>
        <taxon>Catarrhini</taxon>
        <taxon>Hominidae</taxon>
        <taxon>Homo</taxon>
    </lineage>
</organism>
<feature type="signal peptide" evidence="1 2 6 7">
    <location>
        <begin position="1"/>
        <end position="24"/>
    </location>
</feature>
<feature type="chain" id="PRO_0000011640" description="Glycoprotein hormones alpha chain">
    <location>
        <begin position="25"/>
        <end position="116"/>
    </location>
</feature>
<feature type="glycosylation site" id="CAR_000036" description="N-linked (GlcNAc...) asparagine" evidence="3 4 10">
    <location>
        <position position="76"/>
    </location>
</feature>
<feature type="glycosylation site" id="CAR_000037" description="N-linked (GlcNAc...) asparagine" evidence="3 4 10">
    <location>
        <position position="102"/>
    </location>
</feature>
<feature type="disulfide bond" evidence="3 4 8 10">
    <location>
        <begin position="31"/>
        <end position="55"/>
    </location>
</feature>
<feature type="disulfide bond" evidence="3 4 8 10">
    <location>
        <begin position="34"/>
        <end position="84"/>
    </location>
</feature>
<feature type="disulfide bond" evidence="3 4 8 10">
    <location>
        <begin position="52"/>
        <end position="106"/>
    </location>
</feature>
<feature type="disulfide bond" evidence="3 4 8 10">
    <location>
        <begin position="56"/>
        <end position="108"/>
    </location>
</feature>
<feature type="disulfide bond" evidence="3 4 8 10">
    <location>
        <begin position="83"/>
        <end position="111"/>
    </location>
</feature>
<feature type="mutagenesis site" description="Increases from 1 to 3 the number of FSH binding a single FSHR receptor." evidence="4">
    <original>N</original>
    <variation>D</variation>
    <location>
        <position position="76"/>
    </location>
</feature>
<feature type="sequence conflict" description="In Ref. 9; AA sequence." evidence="9" ref="9">
    <original>Q</original>
    <variation>E</variation>
    <location>
        <position position="29"/>
    </location>
</feature>
<feature type="sequence conflict" description="In Ref. 6; AA sequence and 7; AA sequence." evidence="9" ref="6 7">
    <original>CS</original>
    <variation>SC</variation>
    <location>
        <begin position="108"/>
        <end position="109"/>
    </location>
</feature>
<feature type="strand" evidence="12">
    <location>
        <begin position="33"/>
        <end position="38"/>
    </location>
</feature>
<feature type="strand" evidence="12">
    <location>
        <begin position="40"/>
        <end position="42"/>
    </location>
</feature>
<feature type="strand" evidence="12">
    <location>
        <begin position="50"/>
        <end position="62"/>
    </location>
</feature>
<feature type="helix" evidence="12">
    <location>
        <begin position="65"/>
        <end position="68"/>
    </location>
</feature>
<feature type="strand" evidence="12">
    <location>
        <begin position="76"/>
        <end position="81"/>
    </location>
</feature>
<feature type="strand" evidence="12">
    <location>
        <begin position="83"/>
        <end position="93"/>
    </location>
</feature>
<feature type="helix" evidence="12">
    <location>
        <begin position="95"/>
        <end position="97"/>
    </location>
</feature>
<feature type="strand" evidence="12">
    <location>
        <begin position="99"/>
        <end position="109"/>
    </location>
</feature>
<feature type="strand" evidence="11">
    <location>
        <begin position="112"/>
        <end position="115"/>
    </location>
</feature>
<name>GLHA_HUMAN</name>
<proteinExistence type="evidence at protein level"/>
<protein>
    <recommendedName>
        <fullName>Glycoprotein hormones alpha chain</fullName>
    </recommendedName>
    <alternativeName>
        <fullName>Anterior pituitary glycoprotein hormones common subunit alpha</fullName>
    </alternativeName>
    <alternativeName>
        <fullName>Choriogonadotropin alpha chain</fullName>
    </alternativeName>
    <alternativeName>
        <fullName>Chorionic gonadotrophin subunit alpha</fullName>
        <shortName>CG-alpha</shortName>
    </alternativeName>
    <alternativeName>
        <fullName>Follicle-stimulating hormone alpha chain</fullName>
        <shortName>FSH-alpha</shortName>
    </alternativeName>
    <alternativeName>
        <fullName>Follitropin alpha chain</fullName>
    </alternativeName>
    <alternativeName>
        <fullName>Luteinizing hormone alpha chain</fullName>
        <shortName>LSH-alpha</shortName>
    </alternativeName>
    <alternativeName>
        <fullName>Lutropin alpha chain</fullName>
    </alternativeName>
    <alternativeName>
        <fullName>Thyroid-stimulating hormone alpha chain</fullName>
        <shortName>TSH-alpha</shortName>
    </alternativeName>
    <alternativeName>
        <fullName>Thyrotropin alpha chain</fullName>
    </alternativeName>
</protein>
<dbReference type="EMBL" id="J00152">
    <property type="protein sequence ID" value="AAD13690.1"/>
    <property type="molecule type" value="Genomic_DNA"/>
</dbReference>
<dbReference type="EMBL" id="J00150">
    <property type="protein sequence ID" value="AAD13690.1"/>
    <property type="status" value="JOINED"/>
    <property type="molecule type" value="Genomic_DNA"/>
</dbReference>
<dbReference type="EMBL" id="J00151">
    <property type="protein sequence ID" value="AAD13690.1"/>
    <property type="status" value="JOINED"/>
    <property type="molecule type" value="Genomic_DNA"/>
</dbReference>
<dbReference type="EMBL" id="S70585">
    <property type="protein sequence ID" value="AAB30827.1"/>
    <property type="molecule type" value="Genomic_DNA"/>
</dbReference>
<dbReference type="EMBL" id="S70583">
    <property type="protein sequence ID" value="AAB30827.1"/>
    <property type="status" value="JOINED"/>
    <property type="molecule type" value="Genomic_DNA"/>
</dbReference>
<dbReference type="EMBL" id="S70584">
    <property type="protein sequence ID" value="AAB30827.1"/>
    <property type="status" value="JOINED"/>
    <property type="molecule type" value="Genomic_DNA"/>
</dbReference>
<dbReference type="EMBL" id="BC020782">
    <property type="protein sequence ID" value="AAH20782.1"/>
    <property type="molecule type" value="mRNA"/>
</dbReference>
<dbReference type="EMBL" id="BC055080">
    <property type="protein sequence ID" value="AAH55080.1"/>
    <property type="molecule type" value="mRNA"/>
</dbReference>
<dbReference type="EMBL" id="V00518">
    <property type="protein sequence ID" value="CAA23777.1"/>
    <property type="molecule type" value="mRNA"/>
</dbReference>
<dbReference type="CCDS" id="CCDS5007.1"/>
<dbReference type="PIR" id="A93213">
    <property type="entry name" value="TTHUAP"/>
</dbReference>
<dbReference type="RefSeq" id="NP_000726.1">
    <property type="nucleotide sequence ID" value="NM_000735.4"/>
</dbReference>
<dbReference type="RefSeq" id="NP_001239312.1">
    <property type="nucleotide sequence ID" value="NM_001252383.1"/>
</dbReference>
<dbReference type="PDB" id="1DZ7">
    <property type="method" value="NMR"/>
    <property type="chains" value="A=25-116"/>
</dbReference>
<dbReference type="PDB" id="1E9J">
    <property type="method" value="NMR"/>
    <property type="chains" value="A=25-116"/>
</dbReference>
<dbReference type="PDB" id="1FL7">
    <property type="method" value="X-ray"/>
    <property type="resolution" value="3.00 A"/>
    <property type="chains" value="A/C=25-116"/>
</dbReference>
<dbReference type="PDB" id="1HCN">
    <property type="method" value="X-ray"/>
    <property type="resolution" value="2.60 A"/>
    <property type="chains" value="A=25-116"/>
</dbReference>
<dbReference type="PDB" id="1HD4">
    <property type="method" value="NMR"/>
    <property type="chains" value="A=25-116"/>
</dbReference>
<dbReference type="PDB" id="1HRP">
    <property type="method" value="X-ray"/>
    <property type="resolution" value="3.00 A"/>
    <property type="chains" value="A=25-116"/>
</dbReference>
<dbReference type="PDB" id="1QFW">
    <property type="method" value="X-ray"/>
    <property type="resolution" value="3.50 A"/>
    <property type="chains" value="A=25-116"/>
</dbReference>
<dbReference type="PDB" id="1XWD">
    <property type="method" value="X-ray"/>
    <property type="resolution" value="2.92 A"/>
    <property type="chains" value="A/D=25-116"/>
</dbReference>
<dbReference type="PDB" id="4AY9">
    <property type="method" value="X-ray"/>
    <property type="resolution" value="2.50 A"/>
    <property type="chains" value="A/D/G=25-116"/>
</dbReference>
<dbReference type="PDB" id="4MQW">
    <property type="method" value="X-ray"/>
    <property type="resolution" value="2.90 A"/>
    <property type="chains" value="A/D/G=25-116"/>
</dbReference>
<dbReference type="PDB" id="7FIG">
    <property type="method" value="EM"/>
    <property type="resolution" value="3.90 A"/>
    <property type="chains" value="X=1-116"/>
</dbReference>
<dbReference type="PDB" id="7FIH">
    <property type="method" value="EM"/>
    <property type="resolution" value="3.20 A"/>
    <property type="chains" value="X=2-116"/>
</dbReference>
<dbReference type="PDB" id="7FII">
    <property type="method" value="EM"/>
    <property type="resolution" value="4.30 A"/>
    <property type="chains" value="X=1-116"/>
</dbReference>
<dbReference type="PDB" id="7T9I">
    <property type="method" value="EM"/>
    <property type="resolution" value="2.90 A"/>
    <property type="chains" value="A=25-116"/>
</dbReference>
<dbReference type="PDB" id="7UTZ">
    <property type="method" value="EM"/>
    <property type="resolution" value="2.40 A"/>
    <property type="chains" value="A=25-116"/>
</dbReference>
<dbReference type="PDB" id="7XW5">
    <property type="method" value="EM"/>
    <property type="resolution" value="2.96 A"/>
    <property type="chains" value="X=25-116"/>
</dbReference>
<dbReference type="PDB" id="8I2G">
    <property type="method" value="EM"/>
    <property type="resolution" value="2.80 A"/>
    <property type="chains" value="X=25-116"/>
</dbReference>
<dbReference type="PDBsum" id="1DZ7"/>
<dbReference type="PDBsum" id="1E9J"/>
<dbReference type="PDBsum" id="1FL7"/>
<dbReference type="PDBsum" id="1HCN"/>
<dbReference type="PDBsum" id="1HD4"/>
<dbReference type="PDBsum" id="1HRP"/>
<dbReference type="PDBsum" id="1QFW"/>
<dbReference type="PDBsum" id="1XWD"/>
<dbReference type="PDBsum" id="4AY9"/>
<dbReference type="PDBsum" id="4MQW"/>
<dbReference type="PDBsum" id="7FIG"/>
<dbReference type="PDBsum" id="7FIH"/>
<dbReference type="PDBsum" id="7FII"/>
<dbReference type="PDBsum" id="7T9I"/>
<dbReference type="PDBsum" id="7UTZ"/>
<dbReference type="PDBsum" id="7XW5"/>
<dbReference type="PDBsum" id="8I2G"/>
<dbReference type="EMDB" id="EMD-25758"/>
<dbReference type="EMDB" id="EMD-26795"/>
<dbReference type="EMDB" id="EMD-31596"/>
<dbReference type="EMDB" id="EMD-31597"/>
<dbReference type="EMDB" id="EMD-31598"/>
<dbReference type="EMDB" id="EMD-33491"/>
<dbReference type="EMDB" id="EMD-35135"/>
<dbReference type="SMR" id="P01215"/>
<dbReference type="BioGRID" id="107507">
    <property type="interactions" value="28"/>
</dbReference>
<dbReference type="ComplexPortal" id="CPX-6096">
    <property type="entry name" value="Thyroid-stimulating hormone complex"/>
</dbReference>
<dbReference type="ComplexPortal" id="CPX-6097">
    <property type="entry name" value="Luteinizing hormone complex"/>
</dbReference>
<dbReference type="ComplexPortal" id="CPX-665">
    <property type="entry name" value="Follicle-stimulating hormone complex"/>
</dbReference>
<dbReference type="ComplexPortal" id="CPX-748">
    <property type="entry name" value="Chorionic gonadotropin hormone complex"/>
</dbReference>
<dbReference type="DIP" id="DIP-6182N"/>
<dbReference type="FunCoup" id="P01215">
    <property type="interactions" value="662"/>
</dbReference>
<dbReference type="IntAct" id="P01215">
    <property type="interactions" value="23"/>
</dbReference>
<dbReference type="MINT" id="P01215"/>
<dbReference type="STRING" id="9606.ENSP00000482232"/>
<dbReference type="ChEMBL" id="CHEMBL2146305"/>
<dbReference type="GlyConnect" id="165">
    <property type="glycosylation" value="10 N-Linked glycans"/>
</dbReference>
<dbReference type="GlyConnect" id="194">
    <property type="glycosylation" value="33 N-Linked glycans (2 sites)"/>
</dbReference>
<dbReference type="GlyConnect" id="88">
    <property type="glycosylation" value="12 N-Linked glycans, 9 O-Linked glycans"/>
</dbReference>
<dbReference type="GlyCosmos" id="P01215">
    <property type="glycosylation" value="2 sites, 110 glycans"/>
</dbReference>
<dbReference type="GlyGen" id="P01215">
    <property type="glycosylation" value="5 sites, 99 N-linked glycans (3 sites), 15 O-linked glycans (3 sites)"/>
</dbReference>
<dbReference type="iPTMnet" id="P01215"/>
<dbReference type="PhosphoSitePlus" id="P01215"/>
<dbReference type="BioMuta" id="CGA"/>
<dbReference type="DMDM" id="121312"/>
<dbReference type="jPOST" id="P01215"/>
<dbReference type="MassIVE" id="P01215"/>
<dbReference type="PeptideAtlas" id="P01215"/>
<dbReference type="ProteomicsDB" id="51346"/>
<dbReference type="ABCD" id="P01215">
    <property type="antibodies" value="4 sequenced antibodies"/>
</dbReference>
<dbReference type="Antibodypedia" id="18627">
    <property type="antibodies" value="1537 antibodies from 40 providers"/>
</dbReference>
<dbReference type="DNASU" id="1081"/>
<dbReference type="Ensembl" id="ENST00000627148.3">
    <property type="protein sequence ID" value="ENSP00000486024.1"/>
    <property type="gene ID" value="ENSG00000135346.9"/>
</dbReference>
<dbReference type="GeneID" id="1081"/>
<dbReference type="KEGG" id="hsa:1081"/>
<dbReference type="MANE-Select" id="ENST00000627148.3">
    <property type="protein sequence ID" value="ENSP00000486024.1"/>
    <property type="RefSeq nucleotide sequence ID" value="NM_000735.4"/>
    <property type="RefSeq protein sequence ID" value="NP_000726.1"/>
</dbReference>
<dbReference type="UCSC" id="uc063pyi.1">
    <property type="organism name" value="human"/>
</dbReference>
<dbReference type="AGR" id="HGNC:1885"/>
<dbReference type="CTD" id="1081"/>
<dbReference type="DisGeNET" id="1081"/>
<dbReference type="GeneCards" id="CGA"/>
<dbReference type="HGNC" id="HGNC:1885">
    <property type="gene designation" value="CGA"/>
</dbReference>
<dbReference type="HPA" id="ENSG00000135346">
    <property type="expression patterns" value="Tissue enriched (pituitary)"/>
</dbReference>
<dbReference type="MIM" id="118850">
    <property type="type" value="gene"/>
</dbReference>
<dbReference type="neXtProt" id="NX_P01215"/>
<dbReference type="OpenTargets" id="ENSG00000135346"/>
<dbReference type="PharmGKB" id="PA26433"/>
<dbReference type="VEuPathDB" id="HostDB:ENSG00000135346"/>
<dbReference type="GeneTree" id="ENSGT00390000012242"/>
<dbReference type="InParanoid" id="P01215"/>
<dbReference type="OMA" id="VKNHTDC"/>
<dbReference type="OrthoDB" id="9852859at2759"/>
<dbReference type="PAN-GO" id="P01215">
    <property type="GO annotations" value="5 GO annotations based on evolutionary models"/>
</dbReference>
<dbReference type="PhylomeDB" id="P01215"/>
<dbReference type="TreeFam" id="TF332733"/>
<dbReference type="PathwayCommons" id="P01215"/>
<dbReference type="Reactome" id="R-HSA-193048">
    <property type="pathway name" value="Androgen biosynthesis"/>
</dbReference>
<dbReference type="Reactome" id="R-HSA-193993">
    <property type="pathway name" value="Mineralocorticoid biosynthesis"/>
</dbReference>
<dbReference type="Reactome" id="R-HSA-209822">
    <property type="pathway name" value="Glycoprotein hormones"/>
</dbReference>
<dbReference type="Reactome" id="R-HSA-209968">
    <property type="pathway name" value="Thyroxine biosynthesis"/>
</dbReference>
<dbReference type="Reactome" id="R-HSA-375281">
    <property type="pathway name" value="Hormone ligand-binding receptors"/>
</dbReference>
<dbReference type="Reactome" id="R-HSA-418555">
    <property type="pathway name" value="G alpha (s) signalling events"/>
</dbReference>
<dbReference type="Reactome" id="R-HSA-8866910">
    <property type="pathway name" value="TFAP2 (AP-2) family regulates transcription of growth factors and their receptors"/>
</dbReference>
<dbReference type="Reactome" id="R-HSA-975578">
    <property type="pathway name" value="Reactions specific to the complex N-glycan synthesis pathway"/>
</dbReference>
<dbReference type="SABIO-RK" id="P01215"/>
<dbReference type="SignaLink" id="P01215"/>
<dbReference type="SIGNOR" id="P01215"/>
<dbReference type="BioGRID-ORCS" id="1081">
    <property type="hits" value="13 hits in 1147 CRISPR screens"/>
</dbReference>
<dbReference type="ChiTaRS" id="CGA">
    <property type="organism name" value="human"/>
</dbReference>
<dbReference type="EvolutionaryTrace" id="P01215"/>
<dbReference type="GeneWiki" id="Chorionic_gonadotropin_alpha"/>
<dbReference type="GenomeRNAi" id="1081"/>
<dbReference type="Pharos" id="P01215">
    <property type="development level" value="Tbio"/>
</dbReference>
<dbReference type="PRO" id="PR:P01215"/>
<dbReference type="Proteomes" id="UP000005640">
    <property type="component" value="Chromosome 6"/>
</dbReference>
<dbReference type="RNAct" id="P01215">
    <property type="molecule type" value="protein"/>
</dbReference>
<dbReference type="Bgee" id="ENSG00000135346">
    <property type="expression patterns" value="Expressed in adenohypophysis and 96 other cell types or tissues"/>
</dbReference>
<dbReference type="ExpressionAtlas" id="P01215">
    <property type="expression patterns" value="baseline and differential"/>
</dbReference>
<dbReference type="GO" id="GO:0005576">
    <property type="term" value="C:extracellular region"/>
    <property type="evidence" value="ECO:0000304"/>
    <property type="project" value="Reactome"/>
</dbReference>
<dbReference type="GO" id="GO:0005615">
    <property type="term" value="C:extracellular space"/>
    <property type="evidence" value="ECO:0000314"/>
    <property type="project" value="UniProtKB"/>
</dbReference>
<dbReference type="GO" id="GO:0016914">
    <property type="term" value="C:follicle-stimulating hormone complex"/>
    <property type="evidence" value="ECO:0000314"/>
    <property type="project" value="UniProtKB"/>
</dbReference>
<dbReference type="GO" id="GO:0005796">
    <property type="term" value="C:Golgi lumen"/>
    <property type="evidence" value="ECO:0000304"/>
    <property type="project" value="Reactome"/>
</dbReference>
<dbReference type="GO" id="GO:0061696">
    <property type="term" value="C:pituitary gonadotropin complex"/>
    <property type="evidence" value="ECO:0000353"/>
    <property type="project" value="ComplexPortal"/>
</dbReference>
<dbReference type="GO" id="GO:0016913">
    <property type="term" value="F:follicle-stimulating hormone activity"/>
    <property type="evidence" value="ECO:0000314"/>
    <property type="project" value="UniProtKB"/>
</dbReference>
<dbReference type="GO" id="GO:0005179">
    <property type="term" value="F:hormone activity"/>
    <property type="evidence" value="ECO:0000315"/>
    <property type="project" value="AgBase"/>
</dbReference>
<dbReference type="GO" id="GO:0046884">
    <property type="term" value="P:follicle-stimulating hormone secretion"/>
    <property type="evidence" value="ECO:0007669"/>
    <property type="project" value="Ensembl"/>
</dbReference>
<dbReference type="GO" id="GO:0042699">
    <property type="term" value="P:follicle-stimulating hormone signaling pathway"/>
    <property type="evidence" value="ECO:0000303"/>
    <property type="project" value="ComplexPortal"/>
</dbReference>
<dbReference type="GO" id="GO:0007186">
    <property type="term" value="P:G protein-coupled receptor signaling pathway"/>
    <property type="evidence" value="ECO:0000314"/>
    <property type="project" value="UniProtKB"/>
</dbReference>
<dbReference type="GO" id="GO:0009755">
    <property type="term" value="P:hormone-mediated signaling pathway"/>
    <property type="evidence" value="ECO:0000303"/>
    <property type="project" value="ComplexPortal"/>
</dbReference>
<dbReference type="GO" id="GO:0032275">
    <property type="term" value="P:luteinizing hormone secretion"/>
    <property type="evidence" value="ECO:0007669"/>
    <property type="project" value="Ensembl"/>
</dbReference>
<dbReference type="GO" id="GO:0046621">
    <property type="term" value="P:negative regulation of organ growth"/>
    <property type="evidence" value="ECO:0007669"/>
    <property type="project" value="Ensembl"/>
</dbReference>
<dbReference type="GO" id="GO:0035265">
    <property type="term" value="P:organ growth"/>
    <property type="evidence" value="ECO:0007669"/>
    <property type="project" value="Ensembl"/>
</dbReference>
<dbReference type="GO" id="GO:0030335">
    <property type="term" value="P:positive regulation of cell migration"/>
    <property type="evidence" value="ECO:0000303"/>
    <property type="project" value="BHF-UCL"/>
</dbReference>
<dbReference type="GO" id="GO:0008284">
    <property type="term" value="P:positive regulation of cell population proliferation"/>
    <property type="evidence" value="ECO:0000303"/>
    <property type="project" value="BHF-UCL"/>
</dbReference>
<dbReference type="GO" id="GO:0010893">
    <property type="term" value="P:positive regulation of steroid biosynthetic process"/>
    <property type="evidence" value="ECO:0000314"/>
    <property type="project" value="UniProtKB"/>
</dbReference>
<dbReference type="GO" id="GO:0045944">
    <property type="term" value="P:positive regulation of transcription by RNA polymerase II"/>
    <property type="evidence" value="ECO:0000303"/>
    <property type="project" value="BHF-UCL"/>
</dbReference>
<dbReference type="GO" id="GO:0010469">
    <property type="term" value="P:regulation of signaling receptor activity"/>
    <property type="evidence" value="ECO:0000314"/>
    <property type="project" value="UniProtKB"/>
</dbReference>
<dbReference type="GO" id="GO:0030878">
    <property type="term" value="P:thyroid gland development"/>
    <property type="evidence" value="ECO:0007669"/>
    <property type="project" value="Ensembl"/>
</dbReference>
<dbReference type="GO" id="GO:0006590">
    <property type="term" value="P:thyroid hormone generation"/>
    <property type="evidence" value="ECO:0000318"/>
    <property type="project" value="GO_Central"/>
</dbReference>
<dbReference type="DisProt" id="DP02922"/>
<dbReference type="FunFam" id="2.10.90.10:FF:000011">
    <property type="entry name" value="Glycoprotein hormones alpha chain"/>
    <property type="match status" value="1"/>
</dbReference>
<dbReference type="Gene3D" id="2.10.90.10">
    <property type="entry name" value="Cystine-knot cytokines"/>
    <property type="match status" value="1"/>
</dbReference>
<dbReference type="InterPro" id="IPR029034">
    <property type="entry name" value="Cystine-knot_cytokine"/>
</dbReference>
<dbReference type="InterPro" id="IPR000476">
    <property type="entry name" value="Glyco_hormone"/>
</dbReference>
<dbReference type="PANTHER" id="PTHR11509">
    <property type="entry name" value="GLYCOPROTEIN HORMONE ALPHA CHAIN"/>
    <property type="match status" value="1"/>
</dbReference>
<dbReference type="PANTHER" id="PTHR11509:SF0">
    <property type="entry name" value="GLYCOPROTEIN HORMONES ALPHA CHAIN"/>
    <property type="match status" value="1"/>
</dbReference>
<dbReference type="Pfam" id="PF00236">
    <property type="entry name" value="Hormone_6"/>
    <property type="match status" value="1"/>
</dbReference>
<dbReference type="PRINTS" id="PR00274">
    <property type="entry name" value="GLYCOHORMONE"/>
</dbReference>
<dbReference type="SMART" id="SM00067">
    <property type="entry name" value="GHA"/>
    <property type="match status" value="1"/>
</dbReference>
<dbReference type="SUPFAM" id="SSF57501">
    <property type="entry name" value="Cystine-knot cytokines"/>
    <property type="match status" value="1"/>
</dbReference>
<dbReference type="PROSITE" id="PS00779">
    <property type="entry name" value="GLYCO_HORMONE_ALPHA_1"/>
    <property type="match status" value="1"/>
</dbReference>
<dbReference type="PROSITE" id="PS00780">
    <property type="entry name" value="GLYCO_HORMONE_ALPHA_2"/>
    <property type="match status" value="1"/>
</dbReference>
<dbReference type="PROSITE" id="PS50277">
    <property type="entry name" value="GLYCO_HORMONE_ALPHA_3"/>
    <property type="match status" value="1"/>
</dbReference>
<comment type="function">
    <text evidence="4 5">Shared alpha chain of the active heterodimeric glycoprotein hormones thyrotropin/thyroid stimulating hormone/TSH, lutropin/luteinizing hormone/LH, follitropin/follicle stimulating hormone/FSH and choriogonadotropin/CG. These hormones bind specific receptors on target cells that in turn activate downstream signaling pathways.</text>
</comment>
<comment type="subunit">
    <text evidence="3 5">Heterodimer. The active hormones thyrotropin, lutropin, follitropin and choriogonadotropin are heterodimers composed of CGA, a common alpha chain described here and a unique beta chain which confers their biological specificity to the hormones: TSHB for thyrotropin, LHB for lutropin, FSHB for follitropin and choriogonadotropin subunit beta/CGB for choriogonadotropin.</text>
</comment>
<comment type="interaction">
    <interactant intactId="EBI-718913">
        <id>P01215</id>
    </interactant>
    <interactant intactId="EBI-8626304">
        <id>P0DN86</id>
        <label>CGB3</label>
    </interactant>
    <organismsDiffer>false</organismsDiffer>
    <experiments>2</experiments>
</comment>
<comment type="interaction">
    <interactant intactId="EBI-718913">
        <id>P01215</id>
    </interactant>
    <interactant intactId="EBI-1030645">
        <id>P01225</id>
        <label>FSHB</label>
    </interactant>
    <organismsDiffer>false</organismsDiffer>
    <experiments>4</experiments>
</comment>
<comment type="subcellular location">
    <subcellularLocation>
        <location evidence="4 5">Secreted</location>
    </subcellularLocation>
</comment>
<comment type="similarity">
    <text evidence="9">Belongs to the glycoprotein hormones subunit alpha family.</text>
</comment>
<comment type="online information" name="Protein Spotlight">
    <link uri="https://www.proteinspotlight.org/back_issues/077"/>
    <text>Proteic grace - Issue 77 of December 2006</text>
</comment>
<gene>
    <name type="primary">CGA</name>
</gene>
<accession>P01215</accession>
<keyword id="KW-0002">3D-structure</keyword>
<keyword id="KW-0903">Direct protein sequencing</keyword>
<keyword id="KW-1015">Disulfide bond</keyword>
<keyword id="KW-0325">Glycoprotein</keyword>
<keyword id="KW-0372">Hormone</keyword>
<keyword id="KW-1267">Proteomics identification</keyword>
<keyword id="KW-1185">Reference proteome</keyword>
<keyword id="KW-0964">Secreted</keyword>
<keyword id="KW-0732">Signal</keyword>